<keyword id="KW-0046">Antibiotic resistance</keyword>
<keyword id="KW-0067">ATP-binding</keyword>
<keyword id="KW-0547">Nucleotide-binding</keyword>
<keyword id="KW-0548">Nucleotidyltransferase</keyword>
<keyword id="KW-0614">Plasmid</keyword>
<keyword id="KW-0808">Transferase</keyword>
<keyword id="KW-0814">Transposable element</keyword>
<accession>P08881</accession>
<feature type="chain" id="PRO_0000068581" description="Aminoglycoside (3'') (9) adenylyltransferase">
    <location>
        <begin position="1"/>
        <end position="262"/>
    </location>
</feature>
<feature type="sequence variant" description="In plasmid pBP201.">
    <original>K</original>
    <variation>E</variation>
    <location>
        <position position="8"/>
    </location>
</feature>
<feature type="sequence variant" description="In plasmid pBP201.">
    <original>E</original>
    <variation>Q</variation>
    <location>
        <position position="15"/>
    </location>
</feature>
<name>S3AD_KLEPN</name>
<reference key="1">
    <citation type="journal article" date="1990" name="Plasmid">
        <title>Sequencing and expression of aadA, bla, and tnpR from the multiresistance transposon Tn1331.</title>
        <authorList>
            <person name="Tolmasky M.E."/>
        </authorList>
    </citation>
    <scope>NUCLEOTIDE SEQUENCE [GENOMIC DNA]</scope>
    <source>
        <transposon>Tn1331</transposon>
    </source>
</reference>
<reference key="2">
    <citation type="journal article" date="1988" name="J. Bacteriol.">
        <title>Sequencing and expression of the 6'-N-acetyltransferase gene of transposon Tn1331 from Klebsiella pneumoniae.</title>
        <authorList>
            <person name="Nobuta K."/>
            <person name="Tolmasky M.E."/>
            <person name="Crosa L.M."/>
            <person name="Crosa J.H."/>
        </authorList>
    </citation>
    <scope>NUCLEOTIDE SEQUENCE [GENOMIC DNA] OF 1-80</scope>
    <source>
        <transposon>Tn1331</transposon>
    </source>
</reference>
<reference key="3">
    <citation type="journal article" date="1988" name="Mol. Microbiol.">
        <title>Nucleotide sequence analysis of 2''-aminoglycoside nucleotidyl-transferase ANT(2'') from Tn4000: its relationship with AAD(3'') and impact on Tn21 evolution.</title>
        <authorList>
            <person name="Schmidt F.R.J."/>
            <person name="Nuecken E.J."/>
            <person name="Henschke R.B."/>
        </authorList>
    </citation>
    <scope>NUCLEOTIDE SEQUENCE [GENOMIC DNA] OF 1-23</scope>
    <source>
        <strain>18440</strain>
        <transposon>Tn4000</transposon>
    </source>
</reference>
<reference key="4">
    <citation type="journal article" date="1987" name="Antimicrob. Agents Chemother.">
        <title>Tn1331, a novel multiresistance transposon encoding resistance to amikacin and ampicillin in Klebsiella pneumoniae.</title>
        <authorList>
            <person name="Tolmasky M.E."/>
            <person name="Crosa J.H."/>
        </authorList>
    </citation>
    <scope>PROBABLE STREPTOMYCIN RESISTANCE</scope>
    <source>
        <transposon>Tn1331</transposon>
    </source>
</reference>
<evidence type="ECO:0000250" key="1">
    <source>
        <dbReference type="UniProtKB" id="P0AG05"/>
    </source>
</evidence>
<evidence type="ECO:0000303" key="2">
    <source>
    </source>
</evidence>
<evidence type="ECO:0000305" key="3"/>
<evidence type="ECO:0000305" key="4">
    <source>
    </source>
</evidence>
<dbReference type="EC" id="2.7.7.47"/>
<dbReference type="EMBL" id="M55547">
    <property type="protein sequence ID" value="AAA98405.1"/>
    <property type="molecule type" value="Genomic_DNA"/>
</dbReference>
<dbReference type="EMBL" id="X12618">
    <property type="protein sequence ID" value="CAA31140.1"/>
    <property type="molecule type" value="Genomic_DNA"/>
</dbReference>
<dbReference type="EMBL" id="M21682">
    <property type="protein sequence ID" value="AAA69750.1"/>
    <property type="status" value="ALT_SEQ"/>
    <property type="molecule type" value="Genomic_DNA"/>
</dbReference>
<dbReference type="PIR" id="C37392">
    <property type="entry name" value="C37392"/>
</dbReference>
<dbReference type="PIR" id="S04171">
    <property type="entry name" value="S04171"/>
</dbReference>
<dbReference type="RefSeq" id="NP_608308.1">
    <property type="nucleotide sequence ID" value="NC_003486.1"/>
</dbReference>
<dbReference type="RefSeq" id="WP_011018350.1">
    <property type="nucleotide sequence ID" value="NC_003486.1"/>
</dbReference>
<dbReference type="SMR" id="P08881"/>
<dbReference type="BRENDA" id="2.7.7.47">
    <property type="organism ID" value="2814"/>
</dbReference>
<dbReference type="GO" id="GO:0070566">
    <property type="term" value="F:adenylyltransferase activity"/>
    <property type="evidence" value="ECO:0007669"/>
    <property type="project" value="InterPro"/>
</dbReference>
<dbReference type="GO" id="GO:0009012">
    <property type="term" value="F:aminoglycoside 3''-adenylyltransferase activity"/>
    <property type="evidence" value="ECO:0007669"/>
    <property type="project" value="UniProtKB-EC"/>
</dbReference>
<dbReference type="GO" id="GO:0005524">
    <property type="term" value="F:ATP binding"/>
    <property type="evidence" value="ECO:0007669"/>
    <property type="project" value="UniProtKB-KW"/>
</dbReference>
<dbReference type="GO" id="GO:0046677">
    <property type="term" value="P:response to antibiotic"/>
    <property type="evidence" value="ECO:0007669"/>
    <property type="project" value="UniProtKB-KW"/>
</dbReference>
<dbReference type="CDD" id="cd05403">
    <property type="entry name" value="NT_KNTase_like"/>
    <property type="match status" value="1"/>
</dbReference>
<dbReference type="Gene3D" id="3.30.460.10">
    <property type="entry name" value="Beta Polymerase, domain 2"/>
    <property type="match status" value="1"/>
</dbReference>
<dbReference type="InterPro" id="IPR024172">
    <property type="entry name" value="AadA/Aad9"/>
</dbReference>
<dbReference type="InterPro" id="IPR025184">
    <property type="entry name" value="AadA_C"/>
</dbReference>
<dbReference type="InterPro" id="IPR043519">
    <property type="entry name" value="NT_sf"/>
</dbReference>
<dbReference type="InterPro" id="IPR002934">
    <property type="entry name" value="Polymerase_NTP_transf_dom"/>
</dbReference>
<dbReference type="NCBIfam" id="NF033126">
    <property type="entry name" value="ANT_3pp_AadA1"/>
    <property type="match status" value="1"/>
</dbReference>
<dbReference type="NCBIfam" id="NF012157">
    <property type="entry name" value="ANT_3pp_I"/>
    <property type="match status" value="1"/>
</dbReference>
<dbReference type="NCBIfam" id="NF010309">
    <property type="entry name" value="PRK13746.1"/>
    <property type="match status" value="1"/>
</dbReference>
<dbReference type="Pfam" id="PF13427">
    <property type="entry name" value="AadA_C"/>
    <property type="match status" value="1"/>
</dbReference>
<dbReference type="Pfam" id="PF01909">
    <property type="entry name" value="NTP_transf_2"/>
    <property type="match status" value="1"/>
</dbReference>
<dbReference type="PIRSF" id="PIRSF000819">
    <property type="entry name" value="Streptomycin_3-adenylyltransf"/>
    <property type="match status" value="1"/>
</dbReference>
<dbReference type="SUPFAM" id="SSF81301">
    <property type="entry name" value="Nucleotidyltransferase"/>
    <property type="match status" value="1"/>
</dbReference>
<geneLocation type="plasmid">
    <name>pJHC-MW1</name>
</geneLocation>
<geneLocation type="plasmid">
    <name>pBP201</name>
</geneLocation>
<comment type="function">
    <text evidence="1 4">Mediates bacterial resistance to the antibiotics streptomycin and spectinomycin.</text>
</comment>
<comment type="catalytic activity">
    <reaction evidence="1">
        <text>streptomycin + ATP = 3''-O-adenylylstreptomycin + diphosphate</text>
        <dbReference type="Rhea" id="RHEA:20245"/>
        <dbReference type="ChEBI" id="CHEBI:30616"/>
        <dbReference type="ChEBI" id="CHEBI:33019"/>
        <dbReference type="ChEBI" id="CHEBI:58007"/>
        <dbReference type="ChEBI" id="CHEBI:58605"/>
        <dbReference type="EC" id="2.7.7.47"/>
    </reaction>
</comment>
<comment type="catalytic activity">
    <reaction evidence="1">
        <text>spectinomycin + ATP = 9-O-adenylylspectinomycin + diphosphate</text>
        <dbReference type="Rhea" id="RHEA:63228"/>
        <dbReference type="ChEBI" id="CHEBI:30616"/>
        <dbReference type="ChEBI" id="CHEBI:33019"/>
        <dbReference type="ChEBI" id="CHEBI:146260"/>
        <dbReference type="ChEBI" id="CHEBI:146261"/>
    </reaction>
</comment>
<comment type="sequence caution" evidence="3">
    <conflict type="miscellaneous discrepancy">
        <sequence resource="EMBL-CDS" id="AAA69750"/>
    </conflict>
    <text>Contaminating sequence. Sequence of unknown origin in the C-terminal part.</text>
</comment>
<gene>
    <name evidence="2" type="primary">aadA</name>
</gene>
<protein>
    <recommendedName>
        <fullName>Aminoglycoside (3'') (9) adenylyltransferase</fullName>
        <ecNumber>2.7.7.47</ecNumber>
    </recommendedName>
    <alternativeName>
        <fullName>Streptomycin 3''-adenylyltransferase</fullName>
    </alternativeName>
</protein>
<organism>
    <name type="scientific">Klebsiella pneumoniae</name>
    <dbReference type="NCBI Taxonomy" id="573"/>
    <lineage>
        <taxon>Bacteria</taxon>
        <taxon>Pseudomonadati</taxon>
        <taxon>Pseudomonadota</taxon>
        <taxon>Gammaproteobacteria</taxon>
        <taxon>Enterobacterales</taxon>
        <taxon>Enterobacteriaceae</taxon>
        <taxon>Klebsiella/Raoultella group</taxon>
        <taxon>Klebsiella</taxon>
        <taxon>Klebsiella pneumoniae complex</taxon>
    </lineage>
</organism>
<proteinExistence type="inferred from homology"/>
<sequence>MREAVIAKVSTQLSEVVGVIERHLEPTLLAVHLYGSAVDGGLKPHSDIDLLVTVTVRLDETTRRALINDLLETSASPGESEILRAVEVTIVVHDDIIPWRYPAKRELQFGEWQRNDILAGIFEPATIDIDLAILLTKAREHSVALVGPAAEELFDPVPEQDLFEALNETLTLWNSPPDWAGDERNVVLTLSRIWYSAVTGKIAPKDVAADWAMERLPAQYQPVILEARQAYLGQEDRLASRADQLEEFVHYVKGEITKVVGK</sequence>